<accession>Q4QR76</accession>
<sequence length="417" mass="45492">MATKNNPSPKPMGTAQGDPGEAGTLPAPEAGIRDTGSTQLKAKPKKIRKIKALVIDLGSQYCKCGYAGEPRPTYFISSTVGKRSAEMAADAGDTFKETYVGHELLNMEASLKLVNPLKHGVVVDWDCIQNIWEYIFHTAMKILPEEHAVLVSDPPLSPTSNREKYAELMFETFGIPAMHVTSQALLSIYSYGKTSGLVVESGHGVSHVVPISEGDLLPGLPSRVDYAGCDLTNYLMQLLNEAGHKFSDDHLHIIEHIKKKCCYAALLPEEEMSLGLDELHVDYELPDGKVITIGQERFRCSEMLFKPSLVGSTQPGLPELTATCLDRCQGTGFKEEMAANVLLCGGCTMLDGFPERFQRELSLLCPGDSPTVAAAPERKTSVWTGGSILASLQAFQQLWVSKEEFEERGCAAIYSKC</sequence>
<gene>
    <name type="primary">Actl7b</name>
</gene>
<protein>
    <recommendedName>
        <fullName>Actin-like protein 7B</fullName>
    </recommendedName>
</protein>
<evidence type="ECO:0000250" key="1"/>
<evidence type="ECO:0000256" key="2">
    <source>
        <dbReference type="SAM" id="MobiDB-lite"/>
    </source>
</evidence>
<evidence type="ECO:0000305" key="3"/>
<evidence type="ECO:0007744" key="4">
    <source>
    </source>
</evidence>
<organism>
    <name type="scientific">Rattus norvegicus</name>
    <name type="common">Rat</name>
    <dbReference type="NCBI Taxonomy" id="10116"/>
    <lineage>
        <taxon>Eukaryota</taxon>
        <taxon>Metazoa</taxon>
        <taxon>Chordata</taxon>
        <taxon>Craniata</taxon>
        <taxon>Vertebrata</taxon>
        <taxon>Euteleostomi</taxon>
        <taxon>Mammalia</taxon>
        <taxon>Eutheria</taxon>
        <taxon>Euarchontoglires</taxon>
        <taxon>Glires</taxon>
        <taxon>Rodentia</taxon>
        <taxon>Myomorpha</taxon>
        <taxon>Muroidea</taxon>
        <taxon>Muridae</taxon>
        <taxon>Murinae</taxon>
        <taxon>Rattus</taxon>
    </lineage>
</organism>
<name>ACL7B_RAT</name>
<reference key="1">
    <citation type="journal article" date="2004" name="Genome Res.">
        <title>The status, quality, and expansion of the NIH full-length cDNA project: the Mammalian Gene Collection (MGC).</title>
        <authorList>
            <consortium name="The MGC Project Team"/>
        </authorList>
    </citation>
    <scope>NUCLEOTIDE SEQUENCE [LARGE SCALE MRNA]</scope>
    <source>
        <tissue>Testis</tissue>
    </source>
</reference>
<reference key="2">
    <citation type="journal article" date="2012" name="Nat. Commun.">
        <title>Quantitative maps of protein phosphorylation sites across 14 different rat organs and tissues.</title>
        <authorList>
            <person name="Lundby A."/>
            <person name="Secher A."/>
            <person name="Lage K."/>
            <person name="Nordsborg N.B."/>
            <person name="Dmytriyev A."/>
            <person name="Lundby C."/>
            <person name="Olsen J.V."/>
        </authorList>
    </citation>
    <scope>PHOSPHORYLATION [LARGE SCALE ANALYSIS] AT SER-8</scope>
    <scope>IDENTIFICATION BY MASS SPECTROMETRY [LARGE SCALE ANALYSIS]</scope>
</reference>
<proteinExistence type="evidence at protein level"/>
<keyword id="KW-0963">Cytoplasm</keyword>
<keyword id="KW-0206">Cytoskeleton</keyword>
<keyword id="KW-0597">Phosphoprotein</keyword>
<keyword id="KW-1185">Reference proteome</keyword>
<feature type="chain" id="PRO_0000282831" description="Actin-like protein 7B">
    <location>
        <begin position="1"/>
        <end position="417"/>
    </location>
</feature>
<feature type="region of interest" description="Disordered" evidence="2">
    <location>
        <begin position="1"/>
        <end position="39"/>
    </location>
</feature>
<feature type="modified residue" description="Phosphoserine" evidence="4">
    <location>
        <position position="8"/>
    </location>
</feature>
<dbReference type="EMBL" id="BC097412">
    <property type="protein sequence ID" value="AAH97412.1"/>
    <property type="molecule type" value="mRNA"/>
</dbReference>
<dbReference type="RefSeq" id="NP_001020588.1">
    <property type="nucleotide sequence ID" value="NM_001025417.1"/>
</dbReference>
<dbReference type="SMR" id="Q4QR76"/>
<dbReference type="FunCoup" id="Q4QR76">
    <property type="interactions" value="19"/>
</dbReference>
<dbReference type="STRING" id="10116.ENSRNOP00000022291"/>
<dbReference type="iPTMnet" id="Q4QR76"/>
<dbReference type="PhosphoSitePlus" id="Q4QR76"/>
<dbReference type="PaxDb" id="10116-ENSRNOP00000022291"/>
<dbReference type="Ensembl" id="ENSRNOT00000022291.4">
    <property type="protein sequence ID" value="ENSRNOP00000022291.1"/>
    <property type="gene ID" value="ENSRNOG00000016621.4"/>
</dbReference>
<dbReference type="GeneID" id="313183"/>
<dbReference type="KEGG" id="rno:313183"/>
<dbReference type="UCSC" id="RGD:1305655">
    <property type="organism name" value="rat"/>
</dbReference>
<dbReference type="AGR" id="RGD:1305655"/>
<dbReference type="CTD" id="10880"/>
<dbReference type="RGD" id="1305655">
    <property type="gene designation" value="Actl7b"/>
</dbReference>
<dbReference type="eggNOG" id="KOG0676">
    <property type="taxonomic scope" value="Eukaryota"/>
</dbReference>
<dbReference type="GeneTree" id="ENSGT00940000162582"/>
<dbReference type="HOGENOM" id="CLU_027965_0_2_1"/>
<dbReference type="InParanoid" id="Q4QR76"/>
<dbReference type="OMA" id="WDCVQNI"/>
<dbReference type="OrthoDB" id="9925380at2759"/>
<dbReference type="PhylomeDB" id="Q4QR76"/>
<dbReference type="TreeFam" id="TF354237"/>
<dbReference type="PRO" id="PR:Q4QR76"/>
<dbReference type="Proteomes" id="UP000002494">
    <property type="component" value="Chromosome 5"/>
</dbReference>
<dbReference type="Bgee" id="ENSRNOG00000016621">
    <property type="expression patterns" value="Expressed in testis and 13 other cell types or tissues"/>
</dbReference>
<dbReference type="GO" id="GO:0005737">
    <property type="term" value="C:cytoplasm"/>
    <property type="evidence" value="ECO:0000266"/>
    <property type="project" value="RGD"/>
</dbReference>
<dbReference type="GO" id="GO:0005856">
    <property type="term" value="C:cytoskeleton"/>
    <property type="evidence" value="ECO:0007669"/>
    <property type="project" value="UniProtKB-SubCell"/>
</dbReference>
<dbReference type="GO" id="GO:0005634">
    <property type="term" value="C:nucleus"/>
    <property type="evidence" value="ECO:0000318"/>
    <property type="project" value="GO_Central"/>
</dbReference>
<dbReference type="CDD" id="cd10214">
    <property type="entry name" value="ASKHA_NBD_ACTL7"/>
    <property type="match status" value="1"/>
</dbReference>
<dbReference type="FunFam" id="3.90.640.10:FF:000007">
    <property type="entry name" value="Actin like 7B"/>
    <property type="match status" value="1"/>
</dbReference>
<dbReference type="FunFam" id="3.30.420.40:FF:000050">
    <property type="entry name" value="Actin, alpha skeletal muscle"/>
    <property type="match status" value="1"/>
</dbReference>
<dbReference type="Gene3D" id="3.30.420.40">
    <property type="match status" value="2"/>
</dbReference>
<dbReference type="Gene3D" id="3.90.640.10">
    <property type="entry name" value="Actin, Chain A, domain 4"/>
    <property type="match status" value="1"/>
</dbReference>
<dbReference type="InterPro" id="IPR004000">
    <property type="entry name" value="Actin"/>
</dbReference>
<dbReference type="InterPro" id="IPR043129">
    <property type="entry name" value="ATPase_NBD"/>
</dbReference>
<dbReference type="PANTHER" id="PTHR11937">
    <property type="entry name" value="ACTIN"/>
    <property type="match status" value="1"/>
</dbReference>
<dbReference type="Pfam" id="PF00022">
    <property type="entry name" value="Actin"/>
    <property type="match status" value="1"/>
</dbReference>
<dbReference type="PRINTS" id="PR00190">
    <property type="entry name" value="ACTIN"/>
</dbReference>
<dbReference type="SMART" id="SM00268">
    <property type="entry name" value="ACTIN"/>
    <property type="match status" value="1"/>
</dbReference>
<dbReference type="SUPFAM" id="SSF53067">
    <property type="entry name" value="Actin-like ATPase domain"/>
    <property type="match status" value="2"/>
</dbReference>
<comment type="subcellular location">
    <subcellularLocation>
        <location evidence="1">Cytoplasm</location>
        <location evidence="1">Cytoskeleton</location>
    </subcellularLocation>
</comment>
<comment type="similarity">
    <text evidence="3">Belongs to the actin family.</text>
</comment>